<dbReference type="EC" id="3.1.3.105" evidence="2"/>
<dbReference type="EMBL" id="AE004091">
    <property type="protein sequence ID" value="AAG06560.1"/>
    <property type="molecule type" value="Genomic_DNA"/>
</dbReference>
<dbReference type="PIR" id="D83249">
    <property type="entry name" value="D83249"/>
</dbReference>
<dbReference type="RefSeq" id="NP_251862.1">
    <property type="nucleotide sequence ID" value="NC_002516.2"/>
</dbReference>
<dbReference type="RefSeq" id="WP_010895650.1">
    <property type="nucleotide sequence ID" value="NZ_QZGE01000023.1"/>
</dbReference>
<dbReference type="SMR" id="Q9HZ62"/>
<dbReference type="STRING" id="208964.PA3172"/>
<dbReference type="PaxDb" id="208964-PA3172"/>
<dbReference type="DNASU" id="882632"/>
<dbReference type="GeneID" id="882632"/>
<dbReference type="KEGG" id="pae:PA3172"/>
<dbReference type="PATRIC" id="fig|208964.12.peg.3315"/>
<dbReference type="PseudoCAP" id="PA3172"/>
<dbReference type="HOGENOM" id="CLU_045011_19_1_6"/>
<dbReference type="InParanoid" id="Q9HZ62"/>
<dbReference type="OrthoDB" id="9776368at2"/>
<dbReference type="PhylomeDB" id="Q9HZ62"/>
<dbReference type="BioCyc" id="PAER208964:G1FZ6-3232-MONOMER"/>
<dbReference type="UniPathway" id="UPA00544"/>
<dbReference type="Proteomes" id="UP000002438">
    <property type="component" value="Chromosome"/>
</dbReference>
<dbReference type="GO" id="GO:0005829">
    <property type="term" value="C:cytosol"/>
    <property type="evidence" value="ECO:0000318"/>
    <property type="project" value="GO_Central"/>
</dbReference>
<dbReference type="GO" id="GO:0046872">
    <property type="term" value="F:metal ion binding"/>
    <property type="evidence" value="ECO:0007669"/>
    <property type="project" value="UniProtKB-KW"/>
</dbReference>
<dbReference type="GO" id="GO:0008967">
    <property type="term" value="F:phosphoglycolate phosphatase activity"/>
    <property type="evidence" value="ECO:0000318"/>
    <property type="project" value="GO_Central"/>
</dbReference>
<dbReference type="GO" id="GO:0071555">
    <property type="term" value="P:cell wall organization"/>
    <property type="evidence" value="ECO:0007669"/>
    <property type="project" value="UniProtKB-KW"/>
</dbReference>
<dbReference type="GO" id="GO:0006281">
    <property type="term" value="P:DNA repair"/>
    <property type="evidence" value="ECO:0000318"/>
    <property type="project" value="GO_Central"/>
</dbReference>
<dbReference type="GO" id="GO:0009252">
    <property type="term" value="P:peptidoglycan biosynthetic process"/>
    <property type="evidence" value="ECO:0007669"/>
    <property type="project" value="UniProtKB-KW"/>
</dbReference>
<dbReference type="GO" id="GO:0009254">
    <property type="term" value="P:peptidoglycan turnover"/>
    <property type="evidence" value="ECO:0007669"/>
    <property type="project" value="UniProtKB-UniPathway"/>
</dbReference>
<dbReference type="GO" id="GO:0008360">
    <property type="term" value="P:regulation of cell shape"/>
    <property type="evidence" value="ECO:0007669"/>
    <property type="project" value="UniProtKB-KW"/>
</dbReference>
<dbReference type="GO" id="GO:0046677">
    <property type="term" value="P:response to antibiotic"/>
    <property type="evidence" value="ECO:0007669"/>
    <property type="project" value="UniProtKB-KW"/>
</dbReference>
<dbReference type="FunFam" id="1.10.150.240:FF:000020">
    <property type="entry name" value="N-acetylmuramic acid 6-phosphate phosphatase"/>
    <property type="match status" value="1"/>
</dbReference>
<dbReference type="FunFam" id="3.40.50.1000:FF:000022">
    <property type="entry name" value="Phosphoglycolate phosphatase"/>
    <property type="match status" value="1"/>
</dbReference>
<dbReference type="Gene3D" id="3.40.50.1000">
    <property type="entry name" value="HAD superfamily/HAD-like"/>
    <property type="match status" value="1"/>
</dbReference>
<dbReference type="Gene3D" id="1.10.150.240">
    <property type="entry name" value="Putative phosphatase, domain 2"/>
    <property type="match status" value="1"/>
</dbReference>
<dbReference type="InterPro" id="IPR050155">
    <property type="entry name" value="HAD-like_hydrolase_sf"/>
</dbReference>
<dbReference type="InterPro" id="IPR036412">
    <property type="entry name" value="HAD-like_sf"/>
</dbReference>
<dbReference type="InterPro" id="IPR006439">
    <property type="entry name" value="HAD-SF_hydro_IA"/>
</dbReference>
<dbReference type="InterPro" id="IPR041492">
    <property type="entry name" value="HAD_2"/>
</dbReference>
<dbReference type="InterPro" id="IPR023214">
    <property type="entry name" value="HAD_sf"/>
</dbReference>
<dbReference type="InterPro" id="IPR023198">
    <property type="entry name" value="PGP-like_dom2"/>
</dbReference>
<dbReference type="NCBIfam" id="TIGR01549">
    <property type="entry name" value="HAD-SF-IA-v1"/>
    <property type="match status" value="1"/>
</dbReference>
<dbReference type="NCBIfam" id="TIGR01509">
    <property type="entry name" value="HAD-SF-IA-v3"/>
    <property type="match status" value="1"/>
</dbReference>
<dbReference type="NCBIfam" id="NF009696">
    <property type="entry name" value="PRK13222.1-3"/>
    <property type="match status" value="1"/>
</dbReference>
<dbReference type="PANTHER" id="PTHR43434">
    <property type="entry name" value="PHOSPHOGLYCOLATE PHOSPHATASE"/>
    <property type="match status" value="1"/>
</dbReference>
<dbReference type="PANTHER" id="PTHR43434:SF23">
    <property type="entry name" value="PHOSPHOGLYCOLATE PHOSPHATASE"/>
    <property type="match status" value="1"/>
</dbReference>
<dbReference type="Pfam" id="PF13419">
    <property type="entry name" value="HAD_2"/>
    <property type="match status" value="1"/>
</dbReference>
<dbReference type="SFLD" id="SFLDG01135">
    <property type="entry name" value="C1.5.6:_HAD__Beta-PGM__Phospha"/>
    <property type="match status" value="1"/>
</dbReference>
<dbReference type="SFLD" id="SFLDG01129">
    <property type="entry name" value="C1.5:_HAD__Beta-PGM__Phosphata"/>
    <property type="match status" value="1"/>
</dbReference>
<dbReference type="SUPFAM" id="SSF56784">
    <property type="entry name" value="HAD-like"/>
    <property type="match status" value="1"/>
</dbReference>
<proteinExistence type="evidence at protein level"/>
<reference key="1">
    <citation type="journal article" date="2000" name="Nature">
        <title>Complete genome sequence of Pseudomonas aeruginosa PAO1, an opportunistic pathogen.</title>
        <authorList>
            <person name="Stover C.K."/>
            <person name="Pham X.-Q.T."/>
            <person name="Erwin A.L."/>
            <person name="Mizoguchi S.D."/>
            <person name="Warrener P."/>
            <person name="Hickey M.J."/>
            <person name="Brinkman F.S.L."/>
            <person name="Hufnagle W.O."/>
            <person name="Kowalik D.J."/>
            <person name="Lagrou M."/>
            <person name="Garber R.L."/>
            <person name="Goltry L."/>
            <person name="Tolentino E."/>
            <person name="Westbrock-Wadman S."/>
            <person name="Yuan Y."/>
            <person name="Brody L.L."/>
            <person name="Coulter S.N."/>
            <person name="Folger K.R."/>
            <person name="Kas A."/>
            <person name="Larbig K."/>
            <person name="Lim R.M."/>
            <person name="Smith K.A."/>
            <person name="Spencer D.H."/>
            <person name="Wong G.K.-S."/>
            <person name="Wu Z."/>
            <person name="Paulsen I.T."/>
            <person name="Reizer J."/>
            <person name="Saier M.H. Jr."/>
            <person name="Hancock R.E.W."/>
            <person name="Lory S."/>
            <person name="Olson M.V."/>
        </authorList>
    </citation>
    <scope>NUCLEOTIDE SEQUENCE [LARGE SCALE GENOMIC DNA]</scope>
    <source>
        <strain>ATCC 15692 / DSM 22644 / CIP 104116 / JCM 14847 / LMG 12228 / 1C / PRS 101 / PAO1</strain>
    </source>
</reference>
<reference key="2">
    <citation type="journal article" date="2017" name="MBio">
        <title>Identification of MupP as a new peptidoglycan recycling factor and antibiotic resistance determinant in Pseudomonas aeruginosa.</title>
        <authorList>
            <person name="Fumeaux C."/>
            <person name="Bernhardt T.G."/>
        </authorList>
    </citation>
    <scope>IDENTIFICATION</scope>
    <scope>FUNCTION</scope>
    <scope>DISRUPTION PHENOTYPE</scope>
    <scope>PATHWAY</scope>
    <scope>MUTAGENESIS OF ASP-12</scope>
    <source>
        <strain>ATCC 15692 / DSM 22644 / CIP 104116 / JCM 14847 / LMG 12228 / 1C / PRS 101 / PAO1</strain>
    </source>
</reference>
<keyword id="KW-0046">Antibiotic resistance</keyword>
<keyword id="KW-0119">Carbohydrate metabolism</keyword>
<keyword id="KW-0133">Cell shape</keyword>
<keyword id="KW-0961">Cell wall biogenesis/degradation</keyword>
<keyword id="KW-0378">Hydrolase</keyword>
<keyword id="KW-0460">Magnesium</keyword>
<keyword id="KW-0479">Metal-binding</keyword>
<keyword id="KW-0573">Peptidoglycan synthesis</keyword>
<keyword id="KW-1185">Reference proteome</keyword>
<gene>
    <name evidence="4" type="primary">mupP</name>
    <name type="ordered locus">PA3172</name>
</gene>
<organism>
    <name type="scientific">Pseudomonas aeruginosa (strain ATCC 15692 / DSM 22644 / CIP 104116 / JCM 14847 / LMG 12228 / 1C / PRS 101 / PAO1)</name>
    <dbReference type="NCBI Taxonomy" id="208964"/>
    <lineage>
        <taxon>Bacteria</taxon>
        <taxon>Pseudomonadati</taxon>
        <taxon>Pseudomonadota</taxon>
        <taxon>Gammaproteobacteria</taxon>
        <taxon>Pseudomonadales</taxon>
        <taxon>Pseudomonadaceae</taxon>
        <taxon>Pseudomonas</taxon>
    </lineage>
</organism>
<accession>Q9HZ62</accession>
<sequence length="226" mass="24977">MKRMRLKAVLFDMDGTLLDTAPDFIAITQAMRAAHGLPPVDEQRVRDVVSGGARAMVAAAFGLSLDSPEVEPLRQEFLDRYQEHCAVLSRPYDGIPELLAAIEKAGLIWGVVTNKPVRFAEPIMQRLGYAERSRVLVCPDHVTRSKPDPEPLLLACSQLGIDPSRVLFIGDDLRDIESGRDAGTKTAAVRYGYIHPEDNPAHWGADVIVDHPRELIDVLDRALCDC</sequence>
<comment type="function">
    <text evidence="2 3">Specifically catalyzes the dephosphorylation of N-acetylmuramate 6-phosphate (MurNAc-6P) to MurNac (By similarity). Is involved in peptidoglycan recycling as part of a cell wall recycling pathway that bypasses de novo biosynthesis of the peptidoglycan precursor UDP-MurNAc (PubMed:28351916). Plays a role in intrinsic resistance to fosfomycin, which targets the de novo synthesis of UDP-MurNAc (PubMed:28351916).</text>
</comment>
<comment type="catalytic activity">
    <reaction evidence="2">
        <text>N-acetyl-D-muramate 6-phosphate + H2O = N-acetyl-D-muramate + phosphate</text>
        <dbReference type="Rhea" id="RHEA:53728"/>
        <dbReference type="ChEBI" id="CHEBI:15377"/>
        <dbReference type="ChEBI" id="CHEBI:28881"/>
        <dbReference type="ChEBI" id="CHEBI:43474"/>
        <dbReference type="ChEBI" id="CHEBI:58722"/>
        <dbReference type="EC" id="3.1.3.105"/>
    </reaction>
</comment>
<comment type="cofactor">
    <cofactor evidence="2">
        <name>Mg(2+)</name>
        <dbReference type="ChEBI" id="CHEBI:18420"/>
    </cofactor>
</comment>
<comment type="pathway">
    <text evidence="3">Cell wall biogenesis; peptidoglycan recycling.</text>
</comment>
<comment type="disruption phenotype">
    <text evidence="3">Deletion of this gene increases ampC expression and promotes beta-lactam resistance similar to other peptidoglycan recycling mutants. This mutant strain is hypersensitive to the antibiotic fosfomycin which targets MurA activity and thus blocks the conversion of UDP-GlcNAc into UDP-MurNAc as part of the de novo peptidoglycan precursor synthesis pathway.</text>
</comment>
<comment type="similarity">
    <text evidence="5">Belongs to the HAD-like hydrolase superfamily. CbbY/CbbZ/Gph/YieH family. Phosphatase MupP subfamily.</text>
</comment>
<name>MUPP_PSEAE</name>
<feature type="chain" id="PRO_0000108034" description="N-acetylmuramic acid 6-phosphate phosphatase">
    <location>
        <begin position="1"/>
        <end position="226"/>
    </location>
</feature>
<feature type="active site" description="Nucleophile" evidence="1 6">
    <location>
        <position position="12"/>
    </location>
</feature>
<feature type="active site" description="Proton donor" evidence="1">
    <location>
        <position position="14"/>
    </location>
</feature>
<feature type="binding site" evidence="1">
    <location>
        <position position="12"/>
    </location>
    <ligand>
        <name>Mg(2+)</name>
        <dbReference type="ChEBI" id="CHEBI:18420"/>
    </ligand>
</feature>
<feature type="binding site" evidence="1">
    <location>
        <position position="14"/>
    </location>
    <ligand>
        <name>Mg(2+)</name>
        <dbReference type="ChEBI" id="CHEBI:18420"/>
    </ligand>
</feature>
<feature type="binding site" evidence="1">
    <location>
        <position position="171"/>
    </location>
    <ligand>
        <name>Mg(2+)</name>
        <dbReference type="ChEBI" id="CHEBI:18420"/>
    </ligand>
</feature>
<feature type="mutagenesis site" description="Loss of activity." evidence="3">
    <original>D</original>
    <variation>A</variation>
    <location>
        <position position="12"/>
    </location>
</feature>
<evidence type="ECO:0000250" key="1">
    <source>
        <dbReference type="UniProtKB" id="P95649"/>
    </source>
</evidence>
<evidence type="ECO:0000250" key="2">
    <source>
        <dbReference type="UniProtKB" id="Q88M11"/>
    </source>
</evidence>
<evidence type="ECO:0000269" key="3">
    <source>
    </source>
</evidence>
<evidence type="ECO:0000303" key="4">
    <source>
    </source>
</evidence>
<evidence type="ECO:0000305" key="5"/>
<evidence type="ECO:0000305" key="6">
    <source>
    </source>
</evidence>
<protein>
    <recommendedName>
        <fullName evidence="4">N-acetylmuramic acid 6-phosphate phosphatase</fullName>
        <shortName evidence="4">MurNAc 6-phosphate phosphatase</shortName>
        <shortName evidence="4">MurNAc-6P phosphatase</shortName>
        <ecNumber evidence="2">3.1.3.105</ecNumber>
    </recommendedName>
</protein>